<comment type="function">
    <text evidence="2">Inhibits insect, but not mammalian, voltage-gated calcium channels (Cav).</text>
</comment>
<comment type="subcellular location">
    <subcellularLocation>
        <location evidence="5">Secreted</location>
    </subcellularLocation>
</comment>
<comment type="tissue specificity">
    <text evidence="5">Expressed by the venom gland.</text>
</comment>
<comment type="domain">
    <text evidence="1">The presence of a 'disulfide through disulfide knot' structurally defines this protein as a knottin.</text>
</comment>
<comment type="similarity">
    <text evidence="4">Belongs to the neurotoxin 08 (Shiva) family. 01 (omega toxin) subfamily.</text>
</comment>
<name>TO1D_HADIN</name>
<protein>
    <recommendedName>
        <fullName evidence="4">Omega-hexatoxin-Hi1d</fullName>
        <shortName evidence="5">Omega-HXTX-Hi1d</shortName>
    </recommendedName>
</protein>
<accession>S0F1N6</accession>
<organism>
    <name type="scientific">Hadronyche infensa</name>
    <name type="common">Fraser island funnel-web spider</name>
    <name type="synonym">Atrax infensus</name>
    <dbReference type="NCBI Taxonomy" id="153481"/>
    <lineage>
        <taxon>Eukaryota</taxon>
        <taxon>Metazoa</taxon>
        <taxon>Ecdysozoa</taxon>
        <taxon>Arthropoda</taxon>
        <taxon>Chelicerata</taxon>
        <taxon>Arachnida</taxon>
        <taxon>Araneae</taxon>
        <taxon>Mygalomorphae</taxon>
        <taxon>Hexathelidae</taxon>
        <taxon>Hadronyche</taxon>
    </lineage>
</organism>
<feature type="signal peptide" evidence="3">
    <location>
        <begin position="1"/>
        <end position="22"/>
    </location>
</feature>
<feature type="propeptide" id="PRO_0000430902" evidence="1">
    <location>
        <begin position="23"/>
        <end position="40"/>
    </location>
</feature>
<feature type="chain" id="PRO_0000430903" description="Omega-hexatoxin-Hi1d">
    <location>
        <begin position="43"/>
        <end position="79"/>
    </location>
</feature>
<feature type="site" description="Critical for insecticidal activity" evidence="2">
    <location>
        <position position="52"/>
    </location>
</feature>
<feature type="site" description="Critical for insecticidal activity" evidence="2">
    <location>
        <position position="69"/>
    </location>
</feature>
<feature type="site" description="Critical for insecticidal activity" evidence="2">
    <location>
        <position position="77"/>
    </location>
</feature>
<feature type="disulfide bond" evidence="2">
    <location>
        <begin position="46"/>
        <end position="60"/>
    </location>
</feature>
<feature type="disulfide bond" evidence="2">
    <location>
        <begin position="53"/>
        <end position="64"/>
    </location>
</feature>
<feature type="disulfide bond" evidence="2">
    <location>
        <begin position="59"/>
        <end position="78"/>
    </location>
</feature>
<keyword id="KW-0108">Calcium channel impairing toxin</keyword>
<keyword id="KW-0165">Cleavage on pair of basic residues</keyword>
<keyword id="KW-1015">Disulfide bond</keyword>
<keyword id="KW-0872">Ion channel impairing toxin</keyword>
<keyword id="KW-0960">Knottin</keyword>
<keyword id="KW-0964">Secreted</keyword>
<keyword id="KW-0732">Signal</keyword>
<keyword id="KW-0800">Toxin</keyword>
<keyword id="KW-1218">Voltage-gated calcium channel impairing toxin</keyword>
<dbReference type="EMBL" id="HG001286">
    <property type="protein sequence ID" value="CDF44147.1"/>
    <property type="molecule type" value="mRNA"/>
</dbReference>
<dbReference type="SMR" id="S0F1N6"/>
<dbReference type="GO" id="GO:0005576">
    <property type="term" value="C:extracellular region"/>
    <property type="evidence" value="ECO:0007669"/>
    <property type="project" value="UniProtKB-SubCell"/>
</dbReference>
<dbReference type="GO" id="GO:0019855">
    <property type="term" value="F:calcium channel inhibitor activity"/>
    <property type="evidence" value="ECO:0007669"/>
    <property type="project" value="InterPro"/>
</dbReference>
<dbReference type="GO" id="GO:0090729">
    <property type="term" value="F:toxin activity"/>
    <property type="evidence" value="ECO:0007669"/>
    <property type="project" value="UniProtKB-KW"/>
</dbReference>
<dbReference type="GO" id="GO:0006952">
    <property type="term" value="P:defense response"/>
    <property type="evidence" value="ECO:0007669"/>
    <property type="project" value="InterPro"/>
</dbReference>
<dbReference type="InterPro" id="IPR009415">
    <property type="entry name" value="Omega-atracotox"/>
</dbReference>
<dbReference type="Pfam" id="PF06357">
    <property type="entry name" value="Omega-toxin"/>
    <property type="match status" value="1"/>
</dbReference>
<dbReference type="SUPFAM" id="SSF57059">
    <property type="entry name" value="omega toxin-like"/>
    <property type="match status" value="1"/>
</dbReference>
<evidence type="ECO:0000250" key="1"/>
<evidence type="ECO:0000250" key="2">
    <source>
        <dbReference type="UniProtKB" id="P56207"/>
    </source>
</evidence>
<evidence type="ECO:0000255" key="3"/>
<evidence type="ECO:0000303" key="4">
    <source>
    </source>
</evidence>
<evidence type="ECO:0000305" key="5">
    <source>
    </source>
</evidence>
<proteinExistence type="inferred from homology"/>
<reference key="1">
    <citation type="journal article" date="2014" name="BMC Genomics">
        <title>Diversification of a single ancestral gene into a successful toxin superfamily in highly venomous Australian funnel-web spiders.</title>
        <authorList>
            <person name="Pineda S.S."/>
            <person name="Sollod B.L."/>
            <person name="Wilson D."/>
            <person name="Darling A."/>
            <person name="Sunagar K."/>
            <person name="Undheim E.A."/>
            <person name="Kely L."/>
            <person name="Antunes A."/>
            <person name="Fry B.G."/>
            <person name="King G.F."/>
        </authorList>
    </citation>
    <scope>NUCLEOTIDE SEQUENCE [MRNA]</scope>
    <source>
        <tissue>Venom gland</tissue>
    </source>
</reference>
<sequence length="79" mass="8744">MNTATGFIVLLVLATVIGCISADFQGGFEPYEEEDAERIFRRSPTCIPTGQPCPYNENCCNQSCTYKANENGNQVKRCD</sequence>